<evidence type="ECO:0000250" key="1"/>
<evidence type="ECO:0000255" key="2"/>
<evidence type="ECO:0000269" key="3">
    <source>
    </source>
</evidence>
<comment type="function">
    <text>Putative ion channel inhibitor.</text>
</comment>
<comment type="subcellular location">
    <subcellularLocation>
        <location>Secreted</location>
    </subcellularLocation>
</comment>
<comment type="tissue specificity">
    <text>Expressed by the venom gland.</text>
</comment>
<comment type="domain">
    <text evidence="1">The presence of a 'disulfide through disulfide knot' structurally defines this protein as a knottin.</text>
</comment>
<comment type="similarity">
    <text>Belongs to the neurotoxin 25 family. F7 subfamily.</text>
</comment>
<keyword id="KW-0903">Direct protein sequencing</keyword>
<keyword id="KW-1015">Disulfide bond</keyword>
<keyword id="KW-0872">Ion channel impairing toxin</keyword>
<keyword id="KW-0960">Knottin</keyword>
<keyword id="KW-0964">Secreted</keyword>
<keyword id="KW-0732">Signal</keyword>
<keyword id="KW-0800">Toxin</keyword>
<feature type="signal peptide" evidence="2">
    <location>
        <begin position="1"/>
        <end position="18"/>
    </location>
</feature>
<feature type="propeptide" id="PRO_0000401035" evidence="3">
    <location>
        <begin position="19"/>
        <end position="46"/>
    </location>
</feature>
<feature type="peptide" id="PRO_0000401036" description="Hainantoxin-XVIII">
    <location>
        <begin position="47"/>
        <end position="109"/>
    </location>
</feature>
<feature type="disulfide bond" evidence="1">
    <location>
        <begin position="47"/>
        <end position="62"/>
    </location>
</feature>
<feature type="disulfide bond" evidence="1">
    <location>
        <begin position="55"/>
        <end position="68"/>
    </location>
</feature>
<feature type="disulfide bond" evidence="1">
    <location>
        <begin position="59"/>
        <end position="108"/>
    </location>
</feature>
<feature type="disulfide bond" evidence="1">
    <location>
        <begin position="61"/>
        <end position="81"/>
    </location>
</feature>
<organism>
    <name type="scientific">Cyriopagopus hainanus</name>
    <name type="common">Chinese bird spider</name>
    <name type="synonym">Haplopelma hainanum</name>
    <dbReference type="NCBI Taxonomy" id="209901"/>
    <lineage>
        <taxon>Eukaryota</taxon>
        <taxon>Metazoa</taxon>
        <taxon>Ecdysozoa</taxon>
        <taxon>Arthropoda</taxon>
        <taxon>Chelicerata</taxon>
        <taxon>Arachnida</taxon>
        <taxon>Araneae</taxon>
        <taxon>Mygalomorphae</taxon>
        <taxon>Theraphosidae</taxon>
        <taxon>Haplopelma</taxon>
    </lineage>
</organism>
<protein>
    <recommendedName>
        <fullName>Hainantoxin-XVIII</fullName>
        <shortName>HNTX-XVIII</shortName>
    </recommendedName>
    <alternativeName>
        <fullName>Peptide F7-35.67</fullName>
    </alternativeName>
</protein>
<dbReference type="EMBL" id="GU292928">
    <property type="protein sequence ID" value="ADB56744.1"/>
    <property type="molecule type" value="mRNA"/>
</dbReference>
<dbReference type="EMBL" id="GU293115">
    <property type="protein sequence ID" value="ADB56931.1"/>
    <property type="molecule type" value="Genomic_DNA"/>
</dbReference>
<dbReference type="ArachnoServer" id="AS001560">
    <property type="toxin name" value="U14-theraphotoxin-Hhn1a"/>
</dbReference>
<dbReference type="GO" id="GO:0005576">
    <property type="term" value="C:extracellular region"/>
    <property type="evidence" value="ECO:0007669"/>
    <property type="project" value="UniProtKB-SubCell"/>
</dbReference>
<dbReference type="GO" id="GO:0099106">
    <property type="term" value="F:ion channel regulator activity"/>
    <property type="evidence" value="ECO:0007669"/>
    <property type="project" value="UniProtKB-KW"/>
</dbReference>
<dbReference type="GO" id="GO:0090729">
    <property type="term" value="F:toxin activity"/>
    <property type="evidence" value="ECO:0007669"/>
    <property type="project" value="UniProtKB-KW"/>
</dbReference>
<reference key="1">
    <citation type="journal article" date="2010" name="J. Proteome Res.">
        <title>Molecular diversification of peptide toxins from the tarantula Haplopelma hainanum (Ornithoctonus hainana) venom based on transcriptomic, peptidomic, and genomic analyses.</title>
        <authorList>
            <person name="Tang X."/>
            <person name="Zhang Y."/>
            <person name="Hu W."/>
            <person name="Xu D."/>
            <person name="Tao H."/>
            <person name="Yang X."/>
            <person name="Li Y."/>
            <person name="Jiang L."/>
            <person name="Liang S."/>
        </authorList>
    </citation>
    <scope>NUCLEOTIDE SEQUENCE [LARGE SCALE GENOMIC DNA / MRNA]</scope>
    <scope>PROTEIN SEQUENCE OF 47-95 AND 99-107</scope>
    <scope>IDENTIFICATION BY MASS SPECTROMETRY</scope>
    <source>
        <tissue>Venom</tissue>
        <tissue>Venom gland</tissue>
    </source>
</reference>
<sequence>MKLSIIIIATSLVIAVVAFPSKDSKAIENDKTEQRMEIVVQETARACSKQIGDKCKRNCECCGKTVVCGTIYVGGKEVNQCMDKTSDNAILNGLGKGMNFIENTFSFCV</sequence>
<proteinExistence type="evidence at protein level"/>
<name>H18A1_CYRHA</name>
<accession>D2Y251</accession>